<feature type="chain" id="PRO_0000173074" description="Large ribosomal subunit protein bL31">
    <location>
        <begin position="1"/>
        <end position="79"/>
    </location>
</feature>
<protein>
    <recommendedName>
        <fullName evidence="1">Large ribosomal subunit protein bL31</fullName>
    </recommendedName>
    <alternativeName>
        <fullName evidence="2">50S ribosomal protein L31</fullName>
    </alternativeName>
</protein>
<name>RL31_NOSS1</name>
<evidence type="ECO:0000255" key="1">
    <source>
        <dbReference type="HAMAP-Rule" id="MF_00501"/>
    </source>
</evidence>
<evidence type="ECO:0000305" key="2"/>
<sequence>MAKSDIHPKWYPEAKVYCNGQVVMTVGSTKPELHVDVWSGNHPFYTGTQKIIDTEGRVERFLRKYGMSSTQTSGEQTKK</sequence>
<dbReference type="EMBL" id="BA000019">
    <property type="protein sequence ID" value="BAB75885.1"/>
    <property type="molecule type" value="Genomic_DNA"/>
</dbReference>
<dbReference type="PIR" id="AC2329">
    <property type="entry name" value="AC2329"/>
</dbReference>
<dbReference type="RefSeq" id="WP_010998325.1">
    <property type="nucleotide sequence ID" value="NZ_RSCN01000010.1"/>
</dbReference>
<dbReference type="STRING" id="103690.gene:10496235"/>
<dbReference type="KEGG" id="ana:asl4186"/>
<dbReference type="eggNOG" id="COG0254">
    <property type="taxonomic scope" value="Bacteria"/>
</dbReference>
<dbReference type="OrthoDB" id="9803251at2"/>
<dbReference type="Proteomes" id="UP000002483">
    <property type="component" value="Chromosome"/>
</dbReference>
<dbReference type="GO" id="GO:1990904">
    <property type="term" value="C:ribonucleoprotein complex"/>
    <property type="evidence" value="ECO:0007669"/>
    <property type="project" value="UniProtKB-KW"/>
</dbReference>
<dbReference type="GO" id="GO:0005840">
    <property type="term" value="C:ribosome"/>
    <property type="evidence" value="ECO:0007669"/>
    <property type="project" value="UniProtKB-KW"/>
</dbReference>
<dbReference type="GO" id="GO:0019843">
    <property type="term" value="F:rRNA binding"/>
    <property type="evidence" value="ECO:0007669"/>
    <property type="project" value="UniProtKB-KW"/>
</dbReference>
<dbReference type="GO" id="GO:0003735">
    <property type="term" value="F:structural constituent of ribosome"/>
    <property type="evidence" value="ECO:0007669"/>
    <property type="project" value="InterPro"/>
</dbReference>
<dbReference type="GO" id="GO:0006412">
    <property type="term" value="P:translation"/>
    <property type="evidence" value="ECO:0007669"/>
    <property type="project" value="UniProtKB-UniRule"/>
</dbReference>
<dbReference type="Gene3D" id="4.10.830.30">
    <property type="entry name" value="Ribosomal protein L31"/>
    <property type="match status" value="1"/>
</dbReference>
<dbReference type="HAMAP" id="MF_00501">
    <property type="entry name" value="Ribosomal_bL31_1"/>
    <property type="match status" value="1"/>
</dbReference>
<dbReference type="InterPro" id="IPR034704">
    <property type="entry name" value="Ribosomal_bL28/bL31-like_sf"/>
</dbReference>
<dbReference type="InterPro" id="IPR002150">
    <property type="entry name" value="Ribosomal_bL31"/>
</dbReference>
<dbReference type="InterPro" id="IPR027491">
    <property type="entry name" value="Ribosomal_bL31_A"/>
</dbReference>
<dbReference type="InterPro" id="IPR042105">
    <property type="entry name" value="Ribosomal_bL31_sf"/>
</dbReference>
<dbReference type="NCBIfam" id="TIGR00105">
    <property type="entry name" value="L31"/>
    <property type="match status" value="1"/>
</dbReference>
<dbReference type="NCBIfam" id="NF000612">
    <property type="entry name" value="PRK00019.1"/>
    <property type="match status" value="1"/>
</dbReference>
<dbReference type="NCBIfam" id="NF001809">
    <property type="entry name" value="PRK00528.1"/>
    <property type="match status" value="1"/>
</dbReference>
<dbReference type="PANTHER" id="PTHR33280">
    <property type="entry name" value="50S RIBOSOMAL PROTEIN L31, CHLOROPLASTIC"/>
    <property type="match status" value="1"/>
</dbReference>
<dbReference type="PANTHER" id="PTHR33280:SF1">
    <property type="entry name" value="LARGE RIBOSOMAL SUBUNIT PROTEIN BL31C"/>
    <property type="match status" value="1"/>
</dbReference>
<dbReference type="Pfam" id="PF01197">
    <property type="entry name" value="Ribosomal_L31"/>
    <property type="match status" value="1"/>
</dbReference>
<dbReference type="PRINTS" id="PR01249">
    <property type="entry name" value="RIBOSOMALL31"/>
</dbReference>
<dbReference type="SUPFAM" id="SSF143800">
    <property type="entry name" value="L28p-like"/>
    <property type="match status" value="1"/>
</dbReference>
<dbReference type="PROSITE" id="PS01143">
    <property type="entry name" value="RIBOSOMAL_L31"/>
    <property type="match status" value="1"/>
</dbReference>
<accession>Q8YPK8</accession>
<reference key="1">
    <citation type="journal article" date="2001" name="DNA Res.">
        <title>Complete genomic sequence of the filamentous nitrogen-fixing cyanobacterium Anabaena sp. strain PCC 7120.</title>
        <authorList>
            <person name="Kaneko T."/>
            <person name="Nakamura Y."/>
            <person name="Wolk C.P."/>
            <person name="Kuritz T."/>
            <person name="Sasamoto S."/>
            <person name="Watanabe A."/>
            <person name="Iriguchi M."/>
            <person name="Ishikawa A."/>
            <person name="Kawashima K."/>
            <person name="Kimura T."/>
            <person name="Kishida Y."/>
            <person name="Kohara M."/>
            <person name="Matsumoto M."/>
            <person name="Matsuno A."/>
            <person name="Muraki A."/>
            <person name="Nakazaki N."/>
            <person name="Shimpo S."/>
            <person name="Sugimoto M."/>
            <person name="Takazawa M."/>
            <person name="Yamada M."/>
            <person name="Yasuda M."/>
            <person name="Tabata S."/>
        </authorList>
    </citation>
    <scope>NUCLEOTIDE SEQUENCE [LARGE SCALE GENOMIC DNA]</scope>
    <source>
        <strain>PCC 7120 / SAG 25.82 / UTEX 2576</strain>
    </source>
</reference>
<proteinExistence type="inferred from homology"/>
<organism>
    <name type="scientific">Nostoc sp. (strain PCC 7120 / SAG 25.82 / UTEX 2576)</name>
    <dbReference type="NCBI Taxonomy" id="103690"/>
    <lineage>
        <taxon>Bacteria</taxon>
        <taxon>Bacillati</taxon>
        <taxon>Cyanobacteriota</taxon>
        <taxon>Cyanophyceae</taxon>
        <taxon>Nostocales</taxon>
        <taxon>Nostocaceae</taxon>
        <taxon>Nostoc</taxon>
    </lineage>
</organism>
<keyword id="KW-1185">Reference proteome</keyword>
<keyword id="KW-0687">Ribonucleoprotein</keyword>
<keyword id="KW-0689">Ribosomal protein</keyword>
<keyword id="KW-0694">RNA-binding</keyword>
<keyword id="KW-0699">rRNA-binding</keyword>
<gene>
    <name evidence="1" type="primary">rpmE</name>
    <name evidence="1" type="synonym">rpl31</name>
    <name type="ordered locus">asl4186</name>
</gene>
<comment type="function">
    <text evidence="1">Binds the 23S rRNA.</text>
</comment>
<comment type="subunit">
    <text evidence="1">Part of the 50S ribosomal subunit.</text>
</comment>
<comment type="similarity">
    <text evidence="1">Belongs to the bacterial ribosomal protein bL31 family. Type A subfamily.</text>
</comment>